<keyword id="KW-0903">Direct protein sequencing</keyword>
<keyword id="KW-1015">Disulfide bond</keyword>
<keyword id="KW-0255">Endonuclease</keyword>
<keyword id="KW-0378">Hydrolase</keyword>
<keyword id="KW-0456">Lyase</keyword>
<keyword id="KW-0540">Nuclease</keyword>
<keyword id="KW-0964">Secreted</keyword>
<evidence type="ECO:0000250" key="1"/>
<evidence type="ECO:0000256" key="2">
    <source>
        <dbReference type="SAM" id="MobiDB-lite"/>
    </source>
</evidence>
<evidence type="ECO:0000305" key="3"/>
<sequence>ETPAEKFQRQHMDTEHSTASSSNYCNLMMKARDMTSGRCKPLNTFIHEPKSVVDAVCHQENVTCKNGRTNCYKSNSRLSITNCRQTGASKYPNCQYETSNLNKQIIVACEGQYVPVHFDAYV</sequence>
<feature type="chain" id="PRO_0000057204" description="Ribonuclease pancreatic">
    <location>
        <begin position="1"/>
        <end position="122"/>
    </location>
</feature>
<feature type="region of interest" description="Disordered" evidence="2">
    <location>
        <begin position="1"/>
        <end position="20"/>
    </location>
</feature>
<feature type="compositionally biased region" description="Basic and acidic residues" evidence="2">
    <location>
        <begin position="1"/>
        <end position="16"/>
    </location>
</feature>
<feature type="active site" description="Proton acceptor" evidence="1">
    <location>
        <position position="11"/>
    </location>
</feature>
<feature type="active site" description="Proton donor" evidence="1">
    <location>
        <position position="117"/>
    </location>
</feature>
<feature type="binding site" evidence="1">
    <location>
        <position position="6"/>
    </location>
    <ligand>
        <name>substrate</name>
    </ligand>
</feature>
<feature type="binding site" evidence="1">
    <location>
        <position position="9"/>
    </location>
    <ligand>
        <name>substrate</name>
    </ligand>
</feature>
<feature type="binding site" evidence="1">
    <location>
        <begin position="40"/>
        <end position="44"/>
    </location>
    <ligand>
        <name>substrate</name>
    </ligand>
</feature>
<feature type="binding site" evidence="1">
    <location>
        <position position="65"/>
    </location>
    <ligand>
        <name>substrate</name>
    </ligand>
</feature>
<feature type="binding site" evidence="1">
    <location>
        <position position="84"/>
    </location>
    <ligand>
        <name>substrate</name>
    </ligand>
</feature>
<feature type="disulfide bond" evidence="1">
    <location>
        <begin position="25"/>
        <end position="83"/>
    </location>
</feature>
<feature type="disulfide bond" evidence="1">
    <location>
        <begin position="39"/>
        <end position="94"/>
    </location>
</feature>
<feature type="disulfide bond" evidence="1">
    <location>
        <begin position="57"/>
        <end position="109"/>
    </location>
</feature>
<feature type="disulfide bond" evidence="1">
    <location>
        <begin position="64"/>
        <end position="71"/>
    </location>
</feature>
<gene>
    <name type="primary">RNASE1</name>
    <name type="synonym">RNS1</name>
</gene>
<comment type="function">
    <text evidence="1">Endonuclease that catalyzes the cleavage of RNA on the 3' side of pyrimidine nucleotides. Acts on single-stranded and double-stranded RNA (By similarity).</text>
</comment>
<comment type="catalytic activity">
    <reaction>
        <text>an [RNA] containing cytidine + H2O = an [RNA]-3'-cytidine-3'-phosphate + a 5'-hydroxy-ribonucleotide-3'-[RNA].</text>
        <dbReference type="EC" id="4.6.1.18"/>
    </reaction>
</comment>
<comment type="catalytic activity">
    <reaction>
        <text>an [RNA] containing uridine + H2O = an [RNA]-3'-uridine-3'-phosphate + a 5'-hydroxy-ribonucleotide-3'-[RNA].</text>
        <dbReference type="EC" id="4.6.1.18"/>
    </reaction>
</comment>
<comment type="subunit">
    <text evidence="1">Monomer. Interacts with and forms tight 1:1 complexes with RNH1. Dimerization of two such complexes may occur. Interaction with RNH1 inhibits this protein (By similarity).</text>
</comment>
<comment type="subcellular location">
    <subcellularLocation>
        <location>Secreted</location>
    </subcellularLocation>
</comment>
<comment type="tissue specificity">
    <text>Pancreas.</text>
</comment>
<comment type="PTM">
    <text>Not glycosylated although the sequence N-V-T, a recognition site for carbohydrate attachment, is present.</text>
</comment>
<comment type="similarity">
    <text evidence="3">Belongs to the pancreatic ribonuclease family.</text>
</comment>
<name>RNAS1_OSPRU</name>
<accession>P00686</accession>
<protein>
    <recommendedName>
        <fullName>Ribonuclease pancreatic</fullName>
        <ecNumber>4.6.1.18</ecNumber>
    </recommendedName>
    <alternativeName>
        <fullName>RNase 1</fullName>
    </alternativeName>
    <alternativeName>
        <fullName>RNase A</fullName>
    </alternativeName>
</protein>
<organism>
    <name type="scientific">Osphranter rufus</name>
    <name type="common">Red kangaroo</name>
    <name type="synonym">Macropus rufus</name>
    <dbReference type="NCBI Taxonomy" id="9321"/>
    <lineage>
        <taxon>Eukaryota</taxon>
        <taxon>Metazoa</taxon>
        <taxon>Chordata</taxon>
        <taxon>Craniata</taxon>
        <taxon>Vertebrata</taxon>
        <taxon>Euteleostomi</taxon>
        <taxon>Mammalia</taxon>
        <taxon>Metatheria</taxon>
        <taxon>Diprotodontia</taxon>
        <taxon>Macropodidae</taxon>
        <taxon>Osphranter</taxon>
    </lineage>
</organism>
<dbReference type="EC" id="4.6.1.18"/>
<dbReference type="PIR" id="A00833">
    <property type="entry name" value="NRKGR"/>
</dbReference>
<dbReference type="SMR" id="P00686"/>
<dbReference type="GO" id="GO:0005576">
    <property type="term" value="C:extracellular region"/>
    <property type="evidence" value="ECO:0007669"/>
    <property type="project" value="UniProtKB-SubCell"/>
</dbReference>
<dbReference type="GO" id="GO:0016829">
    <property type="term" value="F:lyase activity"/>
    <property type="evidence" value="ECO:0007669"/>
    <property type="project" value="UniProtKB-KW"/>
</dbReference>
<dbReference type="GO" id="GO:0003676">
    <property type="term" value="F:nucleic acid binding"/>
    <property type="evidence" value="ECO:0007669"/>
    <property type="project" value="InterPro"/>
</dbReference>
<dbReference type="GO" id="GO:0004522">
    <property type="term" value="F:ribonuclease A activity"/>
    <property type="evidence" value="ECO:0007669"/>
    <property type="project" value="UniProtKB-EC"/>
</dbReference>
<dbReference type="GO" id="GO:0050830">
    <property type="term" value="P:defense response to Gram-positive bacterium"/>
    <property type="evidence" value="ECO:0007669"/>
    <property type="project" value="TreeGrafter"/>
</dbReference>
<dbReference type="CDD" id="cd06265">
    <property type="entry name" value="RNase_A_canonical"/>
    <property type="match status" value="1"/>
</dbReference>
<dbReference type="FunFam" id="3.10.130.10:FF:000001">
    <property type="entry name" value="Ribonuclease pancreatic"/>
    <property type="match status" value="1"/>
</dbReference>
<dbReference type="Gene3D" id="3.10.130.10">
    <property type="entry name" value="Ribonuclease A-like domain"/>
    <property type="match status" value="1"/>
</dbReference>
<dbReference type="InterPro" id="IPR001427">
    <property type="entry name" value="RNaseA"/>
</dbReference>
<dbReference type="InterPro" id="IPR036816">
    <property type="entry name" value="RNaseA-like_dom_sf"/>
</dbReference>
<dbReference type="InterPro" id="IPR023411">
    <property type="entry name" value="RNaseA_AS"/>
</dbReference>
<dbReference type="InterPro" id="IPR023412">
    <property type="entry name" value="RNaseA_domain"/>
</dbReference>
<dbReference type="PANTHER" id="PTHR11437">
    <property type="entry name" value="RIBONUCLEASE"/>
    <property type="match status" value="1"/>
</dbReference>
<dbReference type="PANTHER" id="PTHR11437:SF24">
    <property type="entry name" value="RIBONUCLEASE PANCREATIC"/>
    <property type="match status" value="1"/>
</dbReference>
<dbReference type="Pfam" id="PF00074">
    <property type="entry name" value="RnaseA"/>
    <property type="match status" value="1"/>
</dbReference>
<dbReference type="PRINTS" id="PR00794">
    <property type="entry name" value="RIBONUCLEASE"/>
</dbReference>
<dbReference type="SMART" id="SM00092">
    <property type="entry name" value="RNAse_Pc"/>
    <property type="match status" value="1"/>
</dbReference>
<dbReference type="SUPFAM" id="SSF54076">
    <property type="entry name" value="RNase A-like"/>
    <property type="match status" value="1"/>
</dbReference>
<dbReference type="PROSITE" id="PS00127">
    <property type="entry name" value="RNASE_PANCREATIC"/>
    <property type="match status" value="1"/>
</dbReference>
<proteinExistence type="evidence at protein level"/>
<reference key="1">
    <citation type="journal article" date="1978" name="Eur. J. Biochem.">
        <title>The amino-acid sequence of kangaroo pancreatic ribonuclease.</title>
        <authorList>
            <person name="Gaastra W."/>
            <person name="Welling G.W."/>
            <person name="Beintema J.J."/>
        </authorList>
    </citation>
    <scope>PROTEIN SEQUENCE</scope>
</reference>